<keyword id="KW-0031">Aminopeptidase</keyword>
<keyword id="KW-0378">Hydrolase</keyword>
<keyword id="KW-0479">Metal-binding</keyword>
<keyword id="KW-0482">Metalloprotease</keyword>
<keyword id="KW-0645">Protease</keyword>
<keyword id="KW-1185">Reference proteome</keyword>
<gene>
    <name type="primary">sgcX</name>
    <name type="synonym">yjhO</name>
    <name type="ordered locus">b4305</name>
    <name type="ordered locus">JW5776</name>
</gene>
<sequence>MSFSVQETLFSLLQHNAISGHENAVADVMLCEFRRQAKEVWRDRLGNVVARYGSDKPDALRLMIFAHMDEVGFMVRKIEPSGFLRFERVGGPAQVTMAGSIVTLTGDKGPVMGCIGIKSYHFAKGDERTQSPSVDKLWIDIGAKDKDDAIRMGIQVGTPVTLYNPPQLLANDLVCSKALDDRLGCTALLGVADAISTMELDIAVYLVASVQEEFNIRGIVPVLRRVKPDLAIGIDITPSCDTPDLHDYSEVRINQGVGITCLNYHGRGTLAGLITPPRLIRMLEQTALEHNIPVQREVAPGVITETGYIQVEQDGIPCASLSIPCRYTHSPAEVASLRDLTDCIRLLTALAGMSAAHFPVEPDSGTTQEAHPL</sequence>
<name>SGCX_ECOLI</name>
<accession>P39366</accession>
<accession>Q2M609</accession>
<protein>
    <recommendedName>
        <fullName>Putative aminopeptidase SgcX</fullName>
        <ecNumber>3.4.11.-</ecNumber>
    </recommendedName>
</protein>
<organism>
    <name type="scientific">Escherichia coli (strain K12)</name>
    <dbReference type="NCBI Taxonomy" id="83333"/>
    <lineage>
        <taxon>Bacteria</taxon>
        <taxon>Pseudomonadati</taxon>
        <taxon>Pseudomonadota</taxon>
        <taxon>Gammaproteobacteria</taxon>
        <taxon>Enterobacterales</taxon>
        <taxon>Enterobacteriaceae</taxon>
        <taxon>Escherichia</taxon>
    </lineage>
</organism>
<reference key="1">
    <citation type="journal article" date="1995" name="Nucleic Acids Res.">
        <title>Analysis of the Escherichia coli genome VI: DNA sequence of the region from 92.8 through 100 minutes.</title>
        <authorList>
            <person name="Burland V.D."/>
            <person name="Plunkett G. III"/>
            <person name="Sofia H.J."/>
            <person name="Daniels D.L."/>
            <person name="Blattner F.R."/>
        </authorList>
    </citation>
    <scope>NUCLEOTIDE SEQUENCE [LARGE SCALE GENOMIC DNA]</scope>
    <source>
        <strain>K12 / MG1655 / ATCC 47076</strain>
    </source>
</reference>
<reference key="2">
    <citation type="journal article" date="1997" name="Science">
        <title>The complete genome sequence of Escherichia coli K-12.</title>
        <authorList>
            <person name="Blattner F.R."/>
            <person name="Plunkett G. III"/>
            <person name="Bloch C.A."/>
            <person name="Perna N.T."/>
            <person name="Burland V."/>
            <person name="Riley M."/>
            <person name="Collado-Vides J."/>
            <person name="Glasner J.D."/>
            <person name="Rode C.K."/>
            <person name="Mayhew G.F."/>
            <person name="Gregor J."/>
            <person name="Davis N.W."/>
            <person name="Kirkpatrick H.A."/>
            <person name="Goeden M.A."/>
            <person name="Rose D.J."/>
            <person name="Mau B."/>
            <person name="Shao Y."/>
        </authorList>
    </citation>
    <scope>NUCLEOTIDE SEQUENCE [LARGE SCALE GENOMIC DNA]</scope>
    <scope>SEQUENCE REVISION TO 125</scope>
    <source>
        <strain>K12 / MG1655 / ATCC 47076</strain>
    </source>
</reference>
<reference key="3">
    <citation type="journal article" date="2006" name="Mol. Syst. Biol.">
        <title>Highly accurate genome sequences of Escherichia coli K-12 strains MG1655 and W3110.</title>
        <authorList>
            <person name="Hayashi K."/>
            <person name="Morooka N."/>
            <person name="Yamamoto Y."/>
            <person name="Fujita K."/>
            <person name="Isono K."/>
            <person name="Choi S."/>
            <person name="Ohtsubo E."/>
            <person name="Baba T."/>
            <person name="Wanner B.L."/>
            <person name="Mori H."/>
            <person name="Horiuchi T."/>
        </authorList>
    </citation>
    <scope>NUCLEOTIDE SEQUENCE [LARGE SCALE GENOMIC DNA]</scope>
    <source>
        <strain>K12 / W3110 / ATCC 27325 / DSM 5911</strain>
    </source>
</reference>
<reference key="4">
    <citation type="journal article" date="1996" name="Genome Sci. Technol.">
        <title>Novel phosphotransferases system genes revealed by bacterial genome analysis: operons encoding homologues of sugar-specific permease domains of the phosphotransferase system and pentose catabolic enzymes.</title>
        <authorList>
            <person name="Reizer J."/>
            <person name="Charbit A."/>
            <person name="Reizer A."/>
            <person name="Saier M.H. Jr."/>
        </authorList>
    </citation>
    <scope>DISCUSSION OF SEQUENCE</scope>
</reference>
<dbReference type="EC" id="3.4.11.-"/>
<dbReference type="EMBL" id="U14003">
    <property type="protein sequence ID" value="AAA97201.1"/>
    <property type="status" value="ALT_INIT"/>
    <property type="molecule type" value="Genomic_DNA"/>
</dbReference>
<dbReference type="EMBL" id="U00096">
    <property type="protein sequence ID" value="AAC77261.2"/>
    <property type="molecule type" value="Genomic_DNA"/>
</dbReference>
<dbReference type="EMBL" id="AP009048">
    <property type="protein sequence ID" value="BAE78297.1"/>
    <property type="molecule type" value="Genomic_DNA"/>
</dbReference>
<dbReference type="PIR" id="C65244">
    <property type="entry name" value="C65244"/>
</dbReference>
<dbReference type="RefSeq" id="NP_418725.4">
    <property type="nucleotide sequence ID" value="NC_000913.3"/>
</dbReference>
<dbReference type="RefSeq" id="WP_000010829.1">
    <property type="nucleotide sequence ID" value="NZ_SSUV01000012.1"/>
</dbReference>
<dbReference type="SMR" id="P39366"/>
<dbReference type="BioGRID" id="4262743">
    <property type="interactions" value="7"/>
</dbReference>
<dbReference type="DIP" id="DIP-10881N"/>
<dbReference type="FunCoup" id="P39366">
    <property type="interactions" value="33"/>
</dbReference>
<dbReference type="STRING" id="511145.b4305"/>
<dbReference type="MEROPS" id="M42.A01"/>
<dbReference type="PaxDb" id="511145-b4305"/>
<dbReference type="EnsemblBacteria" id="AAC77261">
    <property type="protein sequence ID" value="AAC77261"/>
    <property type="gene ID" value="b4305"/>
</dbReference>
<dbReference type="GeneID" id="948840"/>
<dbReference type="KEGG" id="ecj:JW5776"/>
<dbReference type="KEGG" id="eco:b4305"/>
<dbReference type="KEGG" id="ecoc:C3026_23230"/>
<dbReference type="PATRIC" id="fig|1411691.4.peg.2391"/>
<dbReference type="EchoBASE" id="EB2445"/>
<dbReference type="eggNOG" id="COG1363">
    <property type="taxonomic scope" value="Bacteria"/>
</dbReference>
<dbReference type="HOGENOM" id="CLU_047249_0_1_6"/>
<dbReference type="InParanoid" id="P39366"/>
<dbReference type="OMA" id="WQDLYID"/>
<dbReference type="OrthoDB" id="9772053at2"/>
<dbReference type="PhylomeDB" id="P39366"/>
<dbReference type="BioCyc" id="EcoCyc:SGCB-MONOMER"/>
<dbReference type="PRO" id="PR:P39366"/>
<dbReference type="Proteomes" id="UP000000625">
    <property type="component" value="Chromosome"/>
</dbReference>
<dbReference type="GO" id="GO:0046872">
    <property type="term" value="F:metal ion binding"/>
    <property type="evidence" value="ECO:0007669"/>
    <property type="project" value="UniProtKB-KW"/>
</dbReference>
<dbReference type="GO" id="GO:0070006">
    <property type="term" value="F:metalloaminopeptidase activity"/>
    <property type="evidence" value="ECO:0000318"/>
    <property type="project" value="GO_Central"/>
</dbReference>
<dbReference type="GO" id="GO:0006508">
    <property type="term" value="P:proteolysis"/>
    <property type="evidence" value="ECO:0007669"/>
    <property type="project" value="UniProtKB-KW"/>
</dbReference>
<dbReference type="CDD" id="cd05656">
    <property type="entry name" value="M42_Frv"/>
    <property type="match status" value="1"/>
</dbReference>
<dbReference type="Gene3D" id="2.40.30.40">
    <property type="entry name" value="Peptidase M42, domain 2"/>
    <property type="match status" value="1"/>
</dbReference>
<dbReference type="Gene3D" id="3.40.630.10">
    <property type="entry name" value="Zn peptidases"/>
    <property type="match status" value="1"/>
</dbReference>
<dbReference type="InterPro" id="IPR008007">
    <property type="entry name" value="Peptidase_M42"/>
</dbReference>
<dbReference type="InterPro" id="IPR051464">
    <property type="entry name" value="Peptidase_M42_aminopept"/>
</dbReference>
<dbReference type="InterPro" id="IPR023367">
    <property type="entry name" value="Peptidase_M42_dom2"/>
</dbReference>
<dbReference type="PANTHER" id="PTHR32481">
    <property type="entry name" value="AMINOPEPTIDASE"/>
    <property type="match status" value="1"/>
</dbReference>
<dbReference type="PANTHER" id="PTHR32481:SF12">
    <property type="entry name" value="AMINOPEPTIDASE SGCX-RELATED"/>
    <property type="match status" value="1"/>
</dbReference>
<dbReference type="Pfam" id="PF05343">
    <property type="entry name" value="Peptidase_M42"/>
    <property type="match status" value="1"/>
</dbReference>
<dbReference type="PIRSF" id="PIRSF001123">
    <property type="entry name" value="PepA_GA"/>
    <property type="match status" value="1"/>
</dbReference>
<dbReference type="SUPFAM" id="SSF101821">
    <property type="entry name" value="Aminopeptidase/glucanase lid domain"/>
    <property type="match status" value="1"/>
</dbReference>
<dbReference type="SUPFAM" id="SSF53187">
    <property type="entry name" value="Zn-dependent exopeptidases"/>
    <property type="match status" value="1"/>
</dbReference>
<comment type="cofactor">
    <cofactor evidence="1">
        <name>a divalent metal cation</name>
        <dbReference type="ChEBI" id="CHEBI:60240"/>
    </cofactor>
    <text evidence="1">Binds 2 divalent metal cations per subunit.</text>
</comment>
<comment type="similarity">
    <text evidence="2">Belongs to the peptidase M42 family.</text>
</comment>
<comment type="sequence caution" evidence="2">
    <conflict type="erroneous initiation">
        <sequence resource="EMBL-CDS" id="AAA97201"/>
    </conflict>
    <text>Extended N-terminus.</text>
</comment>
<proteinExistence type="inferred from homology"/>
<evidence type="ECO:0000250" key="1"/>
<evidence type="ECO:0000305" key="2"/>
<feature type="chain" id="PRO_0000071656" description="Putative aminopeptidase SgcX">
    <location>
        <begin position="1"/>
        <end position="373"/>
    </location>
</feature>
<feature type="active site" description="Proton acceptor" evidence="1">
    <location>
        <position position="212"/>
    </location>
</feature>
<feature type="binding site" evidence="1">
    <location>
        <position position="67"/>
    </location>
    <ligand>
        <name>a divalent metal cation</name>
        <dbReference type="ChEBI" id="CHEBI:60240"/>
        <label>1</label>
    </ligand>
</feature>
<feature type="binding site" evidence="1">
    <location>
        <position position="180"/>
    </location>
    <ligand>
        <name>a divalent metal cation</name>
        <dbReference type="ChEBI" id="CHEBI:60240"/>
        <label>1</label>
    </ligand>
</feature>
<feature type="binding site" evidence="1">
    <location>
        <position position="180"/>
    </location>
    <ligand>
        <name>a divalent metal cation</name>
        <dbReference type="ChEBI" id="CHEBI:60240"/>
        <label>2</label>
    </ligand>
</feature>
<feature type="binding site" evidence="1">
    <location>
        <position position="213"/>
    </location>
    <ligand>
        <name>a divalent metal cation</name>
        <dbReference type="ChEBI" id="CHEBI:60240"/>
        <label>2</label>
    </ligand>
</feature>
<feature type="binding site" evidence="1">
    <location>
        <position position="235"/>
    </location>
    <ligand>
        <name>a divalent metal cation</name>
        <dbReference type="ChEBI" id="CHEBI:60240"/>
        <label>1</label>
    </ligand>
</feature>
<feature type="binding site" evidence="1">
    <location>
        <position position="329"/>
    </location>
    <ligand>
        <name>a divalent metal cation</name>
        <dbReference type="ChEBI" id="CHEBI:60240"/>
        <label>2</label>
    </ligand>
</feature>
<feature type="sequence conflict" description="In Ref. 1; AAA97201." evidence="2" ref="1">
    <original>G</original>
    <variation>A</variation>
    <location>
        <position position="125"/>
    </location>
</feature>